<proteinExistence type="inferred from homology"/>
<comment type="function">
    <text evidence="1">Catalyzes the initial step of the lipid cycle reactions in the biosynthesis of the cell wall peptidoglycan: transfers peptidoglycan precursor phospho-MurNAc-pentapeptide from UDP-MurNAc-pentapeptide onto the lipid carrier undecaprenyl phosphate, yielding undecaprenyl-pyrophosphoryl-MurNAc-pentapeptide, known as lipid I.</text>
</comment>
<comment type="catalytic activity">
    <reaction evidence="1">
        <text>UDP-N-acetyl-alpha-D-muramoyl-L-alanyl-gamma-D-glutamyl-meso-2,6-diaminopimeloyl-D-alanyl-D-alanine + di-trans,octa-cis-undecaprenyl phosphate = di-trans,octa-cis-undecaprenyl diphospho-N-acetyl-alpha-D-muramoyl-L-alanyl-D-glutamyl-meso-2,6-diaminopimeloyl-D-alanyl-D-alanine + UMP</text>
        <dbReference type="Rhea" id="RHEA:28386"/>
        <dbReference type="ChEBI" id="CHEBI:57865"/>
        <dbReference type="ChEBI" id="CHEBI:60392"/>
        <dbReference type="ChEBI" id="CHEBI:61386"/>
        <dbReference type="ChEBI" id="CHEBI:61387"/>
        <dbReference type="EC" id="2.7.8.13"/>
    </reaction>
</comment>
<comment type="cofactor">
    <cofactor evidence="1">
        <name>Mg(2+)</name>
        <dbReference type="ChEBI" id="CHEBI:18420"/>
    </cofactor>
</comment>
<comment type="pathway">
    <text evidence="1">Cell wall biogenesis; peptidoglycan biosynthesis.</text>
</comment>
<comment type="subcellular location">
    <subcellularLocation>
        <location evidence="1">Cell inner membrane</location>
        <topology evidence="1">Multi-pass membrane protein</topology>
    </subcellularLocation>
</comment>
<comment type="similarity">
    <text evidence="1">Belongs to the glycosyltransferase 4 family. MraY subfamily.</text>
</comment>
<keyword id="KW-0131">Cell cycle</keyword>
<keyword id="KW-0132">Cell division</keyword>
<keyword id="KW-0997">Cell inner membrane</keyword>
<keyword id="KW-1003">Cell membrane</keyword>
<keyword id="KW-0133">Cell shape</keyword>
<keyword id="KW-0961">Cell wall biogenesis/degradation</keyword>
<keyword id="KW-0460">Magnesium</keyword>
<keyword id="KW-0472">Membrane</keyword>
<keyword id="KW-0479">Metal-binding</keyword>
<keyword id="KW-0573">Peptidoglycan synthesis</keyword>
<keyword id="KW-0808">Transferase</keyword>
<keyword id="KW-0812">Transmembrane</keyword>
<keyword id="KW-1133">Transmembrane helix</keyword>
<organism>
    <name type="scientific">Chlamydia felis (strain Fe/C-56)</name>
    <name type="common">Chlamydophila felis</name>
    <dbReference type="NCBI Taxonomy" id="264202"/>
    <lineage>
        <taxon>Bacteria</taxon>
        <taxon>Pseudomonadati</taxon>
        <taxon>Chlamydiota</taxon>
        <taxon>Chlamydiia</taxon>
        <taxon>Chlamydiales</taxon>
        <taxon>Chlamydiaceae</taxon>
        <taxon>Chlamydia/Chlamydophila group</taxon>
        <taxon>Chlamydia</taxon>
    </lineage>
</organism>
<dbReference type="EC" id="2.7.8.13" evidence="1"/>
<dbReference type="EMBL" id="AP006861">
    <property type="protein sequence ID" value="BAE80920.1"/>
    <property type="molecule type" value="Genomic_DNA"/>
</dbReference>
<dbReference type="RefSeq" id="WP_011457705.1">
    <property type="nucleotide sequence ID" value="NC_007899.1"/>
</dbReference>
<dbReference type="SMR" id="Q255W8"/>
<dbReference type="STRING" id="264202.CF0148"/>
<dbReference type="KEGG" id="cfe:CF0148"/>
<dbReference type="eggNOG" id="COG0472">
    <property type="taxonomic scope" value="Bacteria"/>
</dbReference>
<dbReference type="HOGENOM" id="CLU_023982_0_1_0"/>
<dbReference type="OrthoDB" id="9805475at2"/>
<dbReference type="UniPathway" id="UPA00219"/>
<dbReference type="Proteomes" id="UP000001260">
    <property type="component" value="Chromosome"/>
</dbReference>
<dbReference type="GO" id="GO:0005886">
    <property type="term" value="C:plasma membrane"/>
    <property type="evidence" value="ECO:0007669"/>
    <property type="project" value="UniProtKB-SubCell"/>
</dbReference>
<dbReference type="GO" id="GO:0046872">
    <property type="term" value="F:metal ion binding"/>
    <property type="evidence" value="ECO:0007669"/>
    <property type="project" value="UniProtKB-KW"/>
</dbReference>
<dbReference type="GO" id="GO:0008963">
    <property type="term" value="F:phospho-N-acetylmuramoyl-pentapeptide-transferase activity"/>
    <property type="evidence" value="ECO:0007669"/>
    <property type="project" value="UniProtKB-UniRule"/>
</dbReference>
<dbReference type="GO" id="GO:0051992">
    <property type="term" value="F:UDP-N-acetylmuramoyl-L-alanyl-D-glutamyl-meso-2,6-diaminopimelyl-D-alanyl-D-alanine:undecaprenyl-phosphate transferase activity"/>
    <property type="evidence" value="ECO:0007669"/>
    <property type="project" value="RHEA"/>
</dbReference>
<dbReference type="GO" id="GO:0051301">
    <property type="term" value="P:cell division"/>
    <property type="evidence" value="ECO:0007669"/>
    <property type="project" value="UniProtKB-KW"/>
</dbReference>
<dbReference type="GO" id="GO:0071555">
    <property type="term" value="P:cell wall organization"/>
    <property type="evidence" value="ECO:0007669"/>
    <property type="project" value="UniProtKB-KW"/>
</dbReference>
<dbReference type="GO" id="GO:0009252">
    <property type="term" value="P:peptidoglycan biosynthetic process"/>
    <property type="evidence" value="ECO:0007669"/>
    <property type="project" value="UniProtKB-UniRule"/>
</dbReference>
<dbReference type="GO" id="GO:0008360">
    <property type="term" value="P:regulation of cell shape"/>
    <property type="evidence" value="ECO:0007669"/>
    <property type="project" value="UniProtKB-KW"/>
</dbReference>
<dbReference type="CDD" id="cd06852">
    <property type="entry name" value="GT_MraY"/>
    <property type="match status" value="1"/>
</dbReference>
<dbReference type="HAMAP" id="MF_00038">
    <property type="entry name" value="MraY"/>
    <property type="match status" value="1"/>
</dbReference>
<dbReference type="InterPro" id="IPR000715">
    <property type="entry name" value="Glycosyl_transferase_4"/>
</dbReference>
<dbReference type="InterPro" id="IPR003524">
    <property type="entry name" value="PNAcMuramoyl-5peptid_Trfase"/>
</dbReference>
<dbReference type="InterPro" id="IPR018480">
    <property type="entry name" value="PNAcMuramoyl-5peptid_Trfase_CS"/>
</dbReference>
<dbReference type="NCBIfam" id="TIGR00445">
    <property type="entry name" value="mraY"/>
    <property type="match status" value="1"/>
</dbReference>
<dbReference type="PANTHER" id="PTHR22926">
    <property type="entry name" value="PHOSPHO-N-ACETYLMURAMOYL-PENTAPEPTIDE-TRANSFERASE"/>
    <property type="match status" value="1"/>
</dbReference>
<dbReference type="PANTHER" id="PTHR22926:SF5">
    <property type="entry name" value="PHOSPHO-N-ACETYLMURAMOYL-PENTAPEPTIDE-TRANSFERASE HOMOLOG"/>
    <property type="match status" value="1"/>
</dbReference>
<dbReference type="Pfam" id="PF00953">
    <property type="entry name" value="Glycos_transf_4"/>
    <property type="match status" value="1"/>
</dbReference>
<dbReference type="PROSITE" id="PS01347">
    <property type="entry name" value="MRAY_1"/>
    <property type="match status" value="1"/>
</dbReference>
<dbReference type="PROSITE" id="PS01348">
    <property type="entry name" value="MRAY_2"/>
    <property type="match status" value="1"/>
</dbReference>
<feature type="chain" id="PRO_1000002958" description="Phospho-N-acetylmuramoyl-pentapeptide-transferase">
    <location>
        <begin position="1"/>
        <end position="348"/>
    </location>
</feature>
<feature type="transmembrane region" description="Helical" evidence="1">
    <location>
        <begin position="11"/>
        <end position="31"/>
    </location>
</feature>
<feature type="transmembrane region" description="Helical" evidence="1">
    <location>
        <begin position="67"/>
        <end position="87"/>
    </location>
</feature>
<feature type="transmembrane region" description="Helical" evidence="1">
    <location>
        <begin position="92"/>
        <end position="112"/>
    </location>
</feature>
<feature type="transmembrane region" description="Helical" evidence="1">
    <location>
        <begin position="128"/>
        <end position="148"/>
    </location>
</feature>
<feature type="transmembrane region" description="Helical" evidence="1">
    <location>
        <begin position="163"/>
        <end position="183"/>
    </location>
</feature>
<feature type="transmembrane region" description="Helical" evidence="1">
    <location>
        <begin position="198"/>
        <end position="218"/>
    </location>
</feature>
<feature type="transmembrane region" description="Helical" evidence="1">
    <location>
        <begin position="222"/>
        <end position="242"/>
    </location>
</feature>
<feature type="transmembrane region" description="Helical" evidence="1">
    <location>
        <begin position="251"/>
        <end position="271"/>
    </location>
</feature>
<feature type="transmembrane region" description="Helical" evidence="1">
    <location>
        <begin position="276"/>
        <end position="296"/>
    </location>
</feature>
<feature type="transmembrane region" description="Helical" evidence="1">
    <location>
        <begin position="326"/>
        <end position="346"/>
    </location>
</feature>
<gene>
    <name evidence="1" type="primary">mraY</name>
    <name type="ordered locus">CF0148</name>
</gene>
<name>MRAY_CHLFF</name>
<reference key="1">
    <citation type="journal article" date="2006" name="DNA Res.">
        <title>Genome sequence of the cat pathogen, Chlamydophila felis.</title>
        <authorList>
            <person name="Azuma Y."/>
            <person name="Hirakawa H."/>
            <person name="Yamashita A."/>
            <person name="Cai Y."/>
            <person name="Rahman M.A."/>
            <person name="Suzuki H."/>
            <person name="Mitaku S."/>
            <person name="Toh H."/>
            <person name="Goto S."/>
            <person name="Murakami T."/>
            <person name="Sugi K."/>
            <person name="Hayashi H."/>
            <person name="Fukushi H."/>
            <person name="Hattori M."/>
            <person name="Kuhara S."/>
            <person name="Shirai M."/>
        </authorList>
    </citation>
    <scope>NUCLEOTIDE SEQUENCE [LARGE SCALE GENOMIC DNA]</scope>
    <source>
        <strain>Fe/C-56</strain>
    </source>
</reference>
<evidence type="ECO:0000255" key="1">
    <source>
        <dbReference type="HAMAP-Rule" id="MF_00038"/>
    </source>
</evidence>
<sequence length="348" mass="38547">MHSVFSYLNESLILFLVTVMGFAFLVGIFLGKPVIHWLKKQNYYDQVQKEHCAKLETLHKDKKYTPTAGGVLFFLVLLMSIFFLLPLRKPSTWLFVFSIVSWGSLGWYDDIVKKKRKKGHGITAKQKFIVQLLLSAVTVITVFFIDKENSLFCTLQVPFFRTIFLGSSILAKLFCFSLAMLAIIGTSNAVNLTDGLDGLATGITCMSSFGLLIVAIMSPTNPLAYDVSIVLATLVGISLAFLRYNCSPAQVFMGDTGSLLIGGILASCAVMLRAELFLIFLGGVFVAEAGSVILQVASCRLRKKRIFLCSPLHHHYEYKGIPETQVVARFWMAGLLCTVLGIVAALWR</sequence>
<protein>
    <recommendedName>
        <fullName evidence="1">Phospho-N-acetylmuramoyl-pentapeptide-transferase</fullName>
        <ecNumber evidence="1">2.7.8.13</ecNumber>
    </recommendedName>
    <alternativeName>
        <fullName evidence="1">UDP-MurNAc-pentapeptide phosphotransferase</fullName>
    </alternativeName>
</protein>
<accession>Q255W8</accession>